<organism>
    <name type="scientific">Nanoarchaeum equitans (strain Kin4-M)</name>
    <dbReference type="NCBI Taxonomy" id="228908"/>
    <lineage>
        <taxon>Archaea</taxon>
        <taxon>Nanobdellota</taxon>
        <taxon>Candidatus Nanoarchaeia</taxon>
        <taxon>Nanoarchaeales</taxon>
        <taxon>Nanoarchaeaceae</taxon>
        <taxon>Nanoarchaeum</taxon>
    </lineage>
</organism>
<sequence length="154" mass="18254">MIGYLFGNRVLVDDKELPLIEAYYLLDKGELEVYEDDKKLSKEEFLKKCLTYDERFLIRYKAYKELRDKGYTLGTALKFGADFRVYDIGVIPKKGKRSEREHSKWVLYPVSKDETFDFYEFASKNRVAHSTRKKLLLGIVSDKIEFIEVSWKKP</sequence>
<protein>
    <recommendedName>
        <fullName evidence="1">tRNA-splicing endonuclease</fullName>
        <ecNumber evidence="1">4.6.1.16</ecNumber>
    </recommendedName>
    <alternativeName>
        <fullName evidence="1">tRNA-intron endonuclease</fullName>
    </alternativeName>
</protein>
<dbReference type="EC" id="4.6.1.16" evidence="1"/>
<dbReference type="EMBL" id="AE017199">
    <property type="protein sequence ID" value="AAR39058.1"/>
    <property type="molecule type" value="Genomic_DNA"/>
</dbReference>
<dbReference type="PDB" id="3IEY">
    <property type="method" value="X-ray"/>
    <property type="resolution" value="2.11 A"/>
    <property type="chains" value="A=1-154"/>
</dbReference>
<dbReference type="PDBsum" id="3IEY"/>
<dbReference type="SMR" id="Q74MP4"/>
<dbReference type="STRING" id="228908.NEQ205"/>
<dbReference type="EnsemblBacteria" id="AAR39058">
    <property type="protein sequence ID" value="AAR39058"/>
    <property type="gene ID" value="NEQ205"/>
</dbReference>
<dbReference type="KEGG" id="neq:NEQ205"/>
<dbReference type="HOGENOM" id="CLU_114393_0_0_2"/>
<dbReference type="BRENDA" id="4.6.1.16">
    <property type="organism ID" value="8261"/>
</dbReference>
<dbReference type="EvolutionaryTrace" id="Q74MP4"/>
<dbReference type="Proteomes" id="UP000000578">
    <property type="component" value="Chromosome"/>
</dbReference>
<dbReference type="GO" id="GO:0005737">
    <property type="term" value="C:cytoplasm"/>
    <property type="evidence" value="ECO:0007669"/>
    <property type="project" value="TreeGrafter"/>
</dbReference>
<dbReference type="GO" id="GO:0016829">
    <property type="term" value="F:lyase activity"/>
    <property type="evidence" value="ECO:0007669"/>
    <property type="project" value="UniProtKB-KW"/>
</dbReference>
<dbReference type="GO" id="GO:0003676">
    <property type="term" value="F:nucleic acid binding"/>
    <property type="evidence" value="ECO:0007669"/>
    <property type="project" value="InterPro"/>
</dbReference>
<dbReference type="GO" id="GO:0000213">
    <property type="term" value="F:tRNA-intron endonuclease activity"/>
    <property type="evidence" value="ECO:0007669"/>
    <property type="project" value="UniProtKB-UniRule"/>
</dbReference>
<dbReference type="GO" id="GO:0006388">
    <property type="term" value="P:tRNA splicing, via endonucleolytic cleavage and ligation"/>
    <property type="evidence" value="ECO:0007669"/>
    <property type="project" value="UniProtKB-UniRule"/>
</dbReference>
<dbReference type="CDD" id="cd22363">
    <property type="entry name" value="tRNA-intron_lyase_C"/>
    <property type="match status" value="1"/>
</dbReference>
<dbReference type="Gene3D" id="3.40.1350.10">
    <property type="match status" value="1"/>
</dbReference>
<dbReference type="Gene3D" id="3.40.1170.20">
    <property type="entry name" value="tRNA intron endonuclease, N-terminal domain"/>
    <property type="match status" value="1"/>
</dbReference>
<dbReference type="HAMAP" id="MF_01833">
    <property type="entry name" value="EndA_short"/>
    <property type="match status" value="1"/>
</dbReference>
<dbReference type="InterPro" id="IPR011856">
    <property type="entry name" value="tRNA_endonuc-like_dom_sf"/>
</dbReference>
<dbReference type="InterPro" id="IPR036167">
    <property type="entry name" value="tRNA_intron_Endo_cat-like_sf"/>
</dbReference>
<dbReference type="InterPro" id="IPR006677">
    <property type="entry name" value="tRNA_intron_Endonuc_cat-like"/>
</dbReference>
<dbReference type="InterPro" id="IPR006678">
    <property type="entry name" value="tRNA_intron_Endonuc_N"/>
</dbReference>
<dbReference type="InterPro" id="IPR036740">
    <property type="entry name" value="tRNA_intron_Endonuc_N_sf"/>
</dbReference>
<dbReference type="InterPro" id="IPR006676">
    <property type="entry name" value="tRNA_splic"/>
</dbReference>
<dbReference type="InterPro" id="IPR016442">
    <property type="entry name" value="tRNA_splic_arch_short"/>
</dbReference>
<dbReference type="NCBIfam" id="TIGR00324">
    <property type="entry name" value="endA"/>
    <property type="match status" value="1"/>
</dbReference>
<dbReference type="PANTHER" id="PTHR21227">
    <property type="entry name" value="TRNA-SPLICING ENDONUCLEASE SUBUNIT SEN2"/>
    <property type="match status" value="1"/>
</dbReference>
<dbReference type="PANTHER" id="PTHR21227:SF0">
    <property type="entry name" value="TRNA-SPLICING ENDONUCLEASE SUBUNIT SEN2"/>
    <property type="match status" value="1"/>
</dbReference>
<dbReference type="Pfam" id="PF01974">
    <property type="entry name" value="tRNA_int_endo"/>
    <property type="match status" value="1"/>
</dbReference>
<dbReference type="Pfam" id="PF02778">
    <property type="entry name" value="tRNA_int_endo_N"/>
    <property type="match status" value="1"/>
</dbReference>
<dbReference type="PIRSF" id="PIRSF005285">
    <property type="entry name" value="tRNA_splic_archaea"/>
    <property type="match status" value="1"/>
</dbReference>
<dbReference type="SUPFAM" id="SSF53032">
    <property type="entry name" value="tRNA-intron endonuclease catalytic domain-like"/>
    <property type="match status" value="1"/>
</dbReference>
<dbReference type="SUPFAM" id="SSF55267">
    <property type="entry name" value="tRNA-intron endonuclease N-terminal domain-like"/>
    <property type="match status" value="1"/>
</dbReference>
<name>ENDA_NANEQ</name>
<accession>Q74MP4</accession>
<proteinExistence type="evidence at protein level"/>
<feature type="chain" id="PRO_0000109474" description="tRNA-splicing endonuclease">
    <location>
        <begin position="1"/>
        <end position="154"/>
    </location>
</feature>
<feature type="active site" evidence="1">
    <location>
        <position position="86"/>
    </location>
</feature>
<feature type="active site" evidence="1">
    <location>
        <position position="102"/>
    </location>
</feature>
<feature type="active site" evidence="1">
    <location>
        <position position="133"/>
    </location>
</feature>
<feature type="strand" evidence="2">
    <location>
        <begin position="4"/>
        <end position="6"/>
    </location>
</feature>
<feature type="strand" evidence="2">
    <location>
        <begin position="9"/>
        <end position="11"/>
    </location>
</feature>
<feature type="helix" evidence="2">
    <location>
        <begin position="19"/>
        <end position="28"/>
    </location>
</feature>
<feature type="helix" evidence="2">
    <location>
        <begin position="43"/>
        <end position="52"/>
    </location>
</feature>
<feature type="helix" evidence="2">
    <location>
        <begin position="56"/>
        <end position="68"/>
    </location>
</feature>
<feature type="strand" evidence="2">
    <location>
        <begin position="72"/>
        <end position="76"/>
    </location>
</feature>
<feature type="helix" evidence="2">
    <location>
        <begin position="77"/>
        <end position="79"/>
    </location>
</feature>
<feature type="strand" evidence="2">
    <location>
        <begin position="81"/>
        <end position="86"/>
    </location>
</feature>
<feature type="turn" evidence="2">
    <location>
        <begin position="94"/>
        <end position="96"/>
    </location>
</feature>
<feature type="strand" evidence="2">
    <location>
        <begin position="99"/>
        <end position="102"/>
    </location>
</feature>
<feature type="strand" evidence="2">
    <location>
        <begin position="106"/>
        <end position="111"/>
    </location>
</feature>
<feature type="strand" evidence="2">
    <location>
        <begin position="115"/>
        <end position="117"/>
    </location>
</feature>
<feature type="helix" evidence="2">
    <location>
        <begin position="118"/>
        <end position="130"/>
    </location>
</feature>
<feature type="strand" evidence="2">
    <location>
        <begin position="135"/>
        <end position="152"/>
    </location>
</feature>
<evidence type="ECO:0000255" key="1">
    <source>
        <dbReference type="HAMAP-Rule" id="MF_01833"/>
    </source>
</evidence>
<evidence type="ECO:0007829" key="2">
    <source>
        <dbReference type="PDB" id="3IEY"/>
    </source>
</evidence>
<keyword id="KW-0002">3D-structure</keyword>
<keyword id="KW-0456">Lyase</keyword>
<keyword id="KW-1185">Reference proteome</keyword>
<keyword id="KW-0819">tRNA processing</keyword>
<reference key="1">
    <citation type="journal article" date="2003" name="Proc. Natl. Acad. Sci. U.S.A.">
        <title>The genome of Nanoarchaeum equitans: insights into early archaeal evolution and derived parasitism.</title>
        <authorList>
            <person name="Waters E."/>
            <person name="Hohn M.J."/>
            <person name="Ahel I."/>
            <person name="Graham D.E."/>
            <person name="Adams M.D."/>
            <person name="Barnstead M."/>
            <person name="Beeson K.Y."/>
            <person name="Bibbs L."/>
            <person name="Bolanos R."/>
            <person name="Keller M."/>
            <person name="Kretz K."/>
            <person name="Lin X."/>
            <person name="Mathur E."/>
            <person name="Ni J."/>
            <person name="Podar M."/>
            <person name="Richardson T."/>
            <person name="Sutton G.G."/>
            <person name="Simon M."/>
            <person name="Soell D."/>
            <person name="Stetter K.O."/>
            <person name="Short J.M."/>
            <person name="Noorderwier M."/>
        </authorList>
    </citation>
    <scope>NUCLEOTIDE SEQUENCE [LARGE SCALE GENOMIC DNA]</scope>
    <source>
        <strain>Kin4-M</strain>
    </source>
</reference>
<comment type="function">
    <text evidence="1">Endonuclease that removes tRNA introns. Cleaves pre-tRNA at the 5'- and 3'-splice sites to release the intron. The products are an intron and two tRNA half-molecules bearing 2',3' cyclic phosphate and 5'-OH termini. Recognizes a pseudosymmetric substrate in which 2 bulged loops of 3 bases are separated by a stem of 4 bp.</text>
</comment>
<comment type="catalytic activity">
    <reaction evidence="1">
        <text>pretRNA = a 3'-half-tRNA molecule with a 5'-OH end + a 5'-half-tRNA molecule with a 2',3'-cyclic phosphate end + an intron with a 2',3'-cyclic phosphate and a 5'-hydroxyl terminus.</text>
        <dbReference type="EC" id="4.6.1.16"/>
    </reaction>
</comment>
<comment type="subunit">
    <text evidence="1">Homotetramer; although the tetramer contains four active sites, only two participate in the cleavage. Therefore, it should be considered as a dimer of dimers.</text>
</comment>
<comment type="similarity">
    <text evidence="1">Belongs to the tRNA-intron endonuclease family. Archaeal short subfamily.</text>
</comment>
<gene>
    <name evidence="1" type="primary">endA</name>
    <name type="ordered locus">NEQ205</name>
</gene>